<comment type="function">
    <text evidence="1">The UvrABC repair system catalyzes the recognition and processing of DNA lesions. UvrC both incises the 5' and 3' sides of the lesion. The N-terminal half is responsible for the 3' incision and the C-terminal half is responsible for the 5' incision.</text>
</comment>
<comment type="subunit">
    <text evidence="1">Interacts with UvrB in an incision complex.</text>
</comment>
<comment type="subcellular location">
    <subcellularLocation>
        <location evidence="1">Cytoplasm</location>
    </subcellularLocation>
</comment>
<comment type="similarity">
    <text evidence="1">Belongs to the UvrC family.</text>
</comment>
<dbReference type="EMBL" id="AP008226">
    <property type="protein sequence ID" value="BAD71371.1"/>
    <property type="molecule type" value="Genomic_DNA"/>
</dbReference>
<dbReference type="RefSeq" id="WP_011228755.1">
    <property type="nucleotide sequence ID" value="NC_006461.1"/>
</dbReference>
<dbReference type="RefSeq" id="YP_144814.1">
    <property type="nucleotide sequence ID" value="NC_006461.1"/>
</dbReference>
<dbReference type="SMR" id="Q5SI32"/>
<dbReference type="EnsemblBacteria" id="BAD71371">
    <property type="protein sequence ID" value="BAD71371"/>
    <property type="gene ID" value="BAD71371"/>
</dbReference>
<dbReference type="GeneID" id="3168906"/>
<dbReference type="KEGG" id="ttj:TTHA1548"/>
<dbReference type="PATRIC" id="fig|300852.9.peg.1519"/>
<dbReference type="eggNOG" id="COG0322">
    <property type="taxonomic scope" value="Bacteria"/>
</dbReference>
<dbReference type="HOGENOM" id="CLU_014841_3_2_0"/>
<dbReference type="PhylomeDB" id="Q5SI32"/>
<dbReference type="Proteomes" id="UP000000532">
    <property type="component" value="Chromosome"/>
</dbReference>
<dbReference type="GO" id="GO:0005737">
    <property type="term" value="C:cytoplasm"/>
    <property type="evidence" value="ECO:0007669"/>
    <property type="project" value="UniProtKB-SubCell"/>
</dbReference>
<dbReference type="GO" id="GO:0009380">
    <property type="term" value="C:excinuclease repair complex"/>
    <property type="evidence" value="ECO:0007669"/>
    <property type="project" value="InterPro"/>
</dbReference>
<dbReference type="GO" id="GO:0003677">
    <property type="term" value="F:DNA binding"/>
    <property type="evidence" value="ECO:0007669"/>
    <property type="project" value="UniProtKB-UniRule"/>
</dbReference>
<dbReference type="GO" id="GO:0009381">
    <property type="term" value="F:excinuclease ABC activity"/>
    <property type="evidence" value="ECO:0007669"/>
    <property type="project" value="UniProtKB-UniRule"/>
</dbReference>
<dbReference type="GO" id="GO:0006289">
    <property type="term" value="P:nucleotide-excision repair"/>
    <property type="evidence" value="ECO:0007669"/>
    <property type="project" value="UniProtKB-UniRule"/>
</dbReference>
<dbReference type="GO" id="GO:0009432">
    <property type="term" value="P:SOS response"/>
    <property type="evidence" value="ECO:0007669"/>
    <property type="project" value="UniProtKB-UniRule"/>
</dbReference>
<dbReference type="CDD" id="cd10434">
    <property type="entry name" value="GIY-YIG_UvrC_Cho"/>
    <property type="match status" value="1"/>
</dbReference>
<dbReference type="FunFam" id="3.40.1440.10:FF:000001">
    <property type="entry name" value="UvrABC system protein C"/>
    <property type="match status" value="1"/>
</dbReference>
<dbReference type="Gene3D" id="1.10.150.20">
    <property type="entry name" value="5' to 3' exonuclease, C-terminal subdomain"/>
    <property type="match status" value="1"/>
</dbReference>
<dbReference type="Gene3D" id="3.40.1440.10">
    <property type="entry name" value="GIY-YIG endonuclease"/>
    <property type="match status" value="1"/>
</dbReference>
<dbReference type="Gene3D" id="4.10.860.10">
    <property type="entry name" value="UVR domain"/>
    <property type="match status" value="1"/>
</dbReference>
<dbReference type="Gene3D" id="3.30.420.340">
    <property type="entry name" value="UvrC, RNAse H endonuclease domain"/>
    <property type="match status" value="1"/>
</dbReference>
<dbReference type="HAMAP" id="MF_00203">
    <property type="entry name" value="UvrC"/>
    <property type="match status" value="1"/>
</dbReference>
<dbReference type="InterPro" id="IPR000305">
    <property type="entry name" value="GIY-YIG_endonuc"/>
</dbReference>
<dbReference type="InterPro" id="IPR035901">
    <property type="entry name" value="GIY-YIG_endonuc_sf"/>
</dbReference>
<dbReference type="InterPro" id="IPR047296">
    <property type="entry name" value="GIY-YIG_UvrC_Cho"/>
</dbReference>
<dbReference type="InterPro" id="IPR003583">
    <property type="entry name" value="Hlx-hairpin-Hlx_DNA-bd_motif"/>
</dbReference>
<dbReference type="InterPro" id="IPR010994">
    <property type="entry name" value="RuvA_2-like"/>
</dbReference>
<dbReference type="InterPro" id="IPR001943">
    <property type="entry name" value="UVR_dom"/>
</dbReference>
<dbReference type="InterPro" id="IPR036876">
    <property type="entry name" value="UVR_dom_sf"/>
</dbReference>
<dbReference type="InterPro" id="IPR050066">
    <property type="entry name" value="UvrABC_protein_C"/>
</dbReference>
<dbReference type="InterPro" id="IPR004791">
    <property type="entry name" value="UvrC"/>
</dbReference>
<dbReference type="InterPro" id="IPR001162">
    <property type="entry name" value="UvrC_RNase_H_dom"/>
</dbReference>
<dbReference type="InterPro" id="IPR038476">
    <property type="entry name" value="UvrC_RNase_H_dom_sf"/>
</dbReference>
<dbReference type="NCBIfam" id="TIGR00194">
    <property type="entry name" value="uvrC"/>
    <property type="match status" value="1"/>
</dbReference>
<dbReference type="PANTHER" id="PTHR30562:SF1">
    <property type="entry name" value="UVRABC SYSTEM PROTEIN C"/>
    <property type="match status" value="1"/>
</dbReference>
<dbReference type="PANTHER" id="PTHR30562">
    <property type="entry name" value="UVRC/OXIDOREDUCTASE"/>
    <property type="match status" value="1"/>
</dbReference>
<dbReference type="Pfam" id="PF01541">
    <property type="entry name" value="GIY-YIG"/>
    <property type="match status" value="1"/>
</dbReference>
<dbReference type="Pfam" id="PF14520">
    <property type="entry name" value="HHH_5"/>
    <property type="match status" value="1"/>
</dbReference>
<dbReference type="Pfam" id="PF02151">
    <property type="entry name" value="UVR"/>
    <property type="match status" value="1"/>
</dbReference>
<dbReference type="Pfam" id="PF22920">
    <property type="entry name" value="UvrC_RNaseH"/>
    <property type="match status" value="1"/>
</dbReference>
<dbReference type="Pfam" id="PF08459">
    <property type="entry name" value="UvrC_RNaseH_dom"/>
    <property type="match status" value="1"/>
</dbReference>
<dbReference type="SMART" id="SM00465">
    <property type="entry name" value="GIYc"/>
    <property type="match status" value="1"/>
</dbReference>
<dbReference type="SMART" id="SM00278">
    <property type="entry name" value="HhH1"/>
    <property type="match status" value="2"/>
</dbReference>
<dbReference type="SUPFAM" id="SSF46600">
    <property type="entry name" value="C-terminal UvrC-binding domain of UvrB"/>
    <property type="match status" value="1"/>
</dbReference>
<dbReference type="SUPFAM" id="SSF82771">
    <property type="entry name" value="GIY-YIG endonuclease"/>
    <property type="match status" value="1"/>
</dbReference>
<dbReference type="SUPFAM" id="SSF47781">
    <property type="entry name" value="RuvA domain 2-like"/>
    <property type="match status" value="1"/>
</dbReference>
<dbReference type="PROSITE" id="PS50164">
    <property type="entry name" value="GIY_YIG"/>
    <property type="match status" value="1"/>
</dbReference>
<dbReference type="PROSITE" id="PS50151">
    <property type="entry name" value="UVR"/>
    <property type="match status" value="1"/>
</dbReference>
<dbReference type="PROSITE" id="PS50165">
    <property type="entry name" value="UVRC"/>
    <property type="match status" value="1"/>
</dbReference>
<gene>
    <name evidence="1" type="primary">uvrC</name>
    <name type="ordered locus">TTHA1548</name>
</gene>
<keyword id="KW-0963">Cytoplasm</keyword>
<keyword id="KW-0227">DNA damage</keyword>
<keyword id="KW-0228">DNA excision</keyword>
<keyword id="KW-0234">DNA repair</keyword>
<keyword id="KW-0267">Excision nuclease</keyword>
<keyword id="KW-1185">Reference proteome</keyword>
<keyword id="KW-0742">SOS response</keyword>
<reference key="1">
    <citation type="submission" date="2004-11" db="EMBL/GenBank/DDBJ databases">
        <title>Complete genome sequence of Thermus thermophilus HB8.</title>
        <authorList>
            <person name="Masui R."/>
            <person name="Kurokawa K."/>
            <person name="Nakagawa N."/>
            <person name="Tokunaga F."/>
            <person name="Koyama Y."/>
            <person name="Shibata T."/>
            <person name="Oshima T."/>
            <person name="Yokoyama S."/>
            <person name="Yasunaga T."/>
            <person name="Kuramitsu S."/>
        </authorList>
    </citation>
    <scope>NUCLEOTIDE SEQUENCE [LARGE SCALE GENOMIC DNA]</scope>
    <source>
        <strain>ATCC 27634 / DSM 579 / HB8</strain>
    </source>
</reference>
<protein>
    <recommendedName>
        <fullName evidence="1">UvrABC system protein C</fullName>
        <shortName evidence="1">Protein UvrC</shortName>
    </recommendedName>
    <alternativeName>
        <fullName evidence="1">Excinuclease ABC subunit C</fullName>
    </alternativeName>
</protein>
<proteinExistence type="inferred from homology"/>
<organism>
    <name type="scientific">Thermus thermophilus (strain ATCC 27634 / DSM 579 / HB8)</name>
    <dbReference type="NCBI Taxonomy" id="300852"/>
    <lineage>
        <taxon>Bacteria</taxon>
        <taxon>Thermotogati</taxon>
        <taxon>Deinococcota</taxon>
        <taxon>Deinococci</taxon>
        <taxon>Thermales</taxon>
        <taxon>Thermaceae</taxon>
        <taxon>Thermus</taxon>
    </lineage>
</organism>
<accession>Q5SI32</accession>
<sequence length="590" mass="67104">MRAQDLPPLPETPGVYLWKRGEEVLYVGKAKSLRARVKSYFHAEGKARRIAEEATGLDFIATRDEVEALLLEANLIKAHRPLYNVLLKDDKHYPFLKLTNEPFPTLLVVRRVEEDGAKYYGPFPEAGALRRIKTLIDRLFPLRKNSGYPMKRRRYPCLNYSMGRCLAPCVGKADPEAYQEVVRQVEAVLEGRVDGLLQELEAKMREAARRLEFERAAEIRDQMEALRAFFSTDQQAFDPEMGDLDFLGMARSGALAVVQLYQVRSGRILGRISRVVEKEEATDEEILWAFLRDHYLEASPLPPLVLLPFPLEDLESLAELLKRRAGRKVELRVPKKGEKARLLELAERNARLALETELKLRERRGEHPALKALQDLLGLPARPWRLEGYDISHLQGQARVFSIAVFEGGRPKRQEYRRMRLKAGNDDYAAMEEGVFRRYTGSLKDLPLPDLLLIDGGVGQVRAAARALERAGLRLPLVGLAKGEEVLVTPEGRELRLPLTHPALQLLIHLRDEAHQNGLRYHRKRRSEELFRVLQGIPGIGEKRRRLLLERYGGLRALKEAPLEELARLPGMSLEAARALKAALAEEEPA</sequence>
<name>UVRC_THET8</name>
<feature type="chain" id="PRO_0000227487" description="UvrABC system protein C">
    <location>
        <begin position="1"/>
        <end position="590"/>
    </location>
</feature>
<feature type="domain" description="GIY-YIG" evidence="1">
    <location>
        <begin position="11"/>
        <end position="85"/>
    </location>
</feature>
<feature type="domain" description="UVR" evidence="1">
    <location>
        <begin position="194"/>
        <end position="229"/>
    </location>
</feature>
<evidence type="ECO:0000255" key="1">
    <source>
        <dbReference type="HAMAP-Rule" id="MF_00203"/>
    </source>
</evidence>